<organism>
    <name type="scientific">Paracoccus denitrificans (strain Pd 1222)</name>
    <dbReference type="NCBI Taxonomy" id="318586"/>
    <lineage>
        <taxon>Bacteria</taxon>
        <taxon>Pseudomonadati</taxon>
        <taxon>Pseudomonadota</taxon>
        <taxon>Alphaproteobacteria</taxon>
        <taxon>Rhodobacterales</taxon>
        <taxon>Paracoccaceae</taxon>
        <taxon>Paracoccus</taxon>
    </lineage>
</organism>
<evidence type="ECO:0000255" key="1">
    <source>
        <dbReference type="HAMAP-Rule" id="MF_00033"/>
    </source>
</evidence>
<gene>
    <name evidence="1" type="primary">murG</name>
    <name type="ordered locus">Pden_4495</name>
</gene>
<proteinExistence type="inferred from homology"/>
<reference key="1">
    <citation type="submission" date="2006-12" db="EMBL/GenBank/DDBJ databases">
        <title>Complete sequence of chromosome 2 of Paracoccus denitrificans PD1222.</title>
        <authorList>
            <person name="Copeland A."/>
            <person name="Lucas S."/>
            <person name="Lapidus A."/>
            <person name="Barry K."/>
            <person name="Detter J.C."/>
            <person name="Glavina del Rio T."/>
            <person name="Hammon N."/>
            <person name="Israni S."/>
            <person name="Dalin E."/>
            <person name="Tice H."/>
            <person name="Pitluck S."/>
            <person name="Munk A.C."/>
            <person name="Brettin T."/>
            <person name="Bruce D."/>
            <person name="Han C."/>
            <person name="Tapia R."/>
            <person name="Gilna P."/>
            <person name="Schmutz J."/>
            <person name="Larimer F."/>
            <person name="Land M."/>
            <person name="Hauser L."/>
            <person name="Kyrpides N."/>
            <person name="Lykidis A."/>
            <person name="Spiro S."/>
            <person name="Richardson D.J."/>
            <person name="Moir J.W.B."/>
            <person name="Ferguson S.J."/>
            <person name="van Spanning R.J.M."/>
            <person name="Richardson P."/>
        </authorList>
    </citation>
    <scope>NUCLEOTIDE SEQUENCE [LARGE SCALE GENOMIC DNA]</scope>
    <source>
        <strain>Pd 1222</strain>
    </source>
</reference>
<keyword id="KW-0131">Cell cycle</keyword>
<keyword id="KW-0132">Cell division</keyword>
<keyword id="KW-0997">Cell inner membrane</keyword>
<keyword id="KW-1003">Cell membrane</keyword>
<keyword id="KW-0133">Cell shape</keyword>
<keyword id="KW-0961">Cell wall biogenesis/degradation</keyword>
<keyword id="KW-0328">Glycosyltransferase</keyword>
<keyword id="KW-0472">Membrane</keyword>
<keyword id="KW-0573">Peptidoglycan synthesis</keyword>
<keyword id="KW-1185">Reference proteome</keyword>
<keyword id="KW-0808">Transferase</keyword>
<name>MURG_PARDP</name>
<comment type="function">
    <text evidence="1">Cell wall formation. Catalyzes the transfer of a GlcNAc subunit on undecaprenyl-pyrophosphoryl-MurNAc-pentapeptide (lipid intermediate I) to form undecaprenyl-pyrophosphoryl-MurNAc-(pentapeptide)GlcNAc (lipid intermediate II).</text>
</comment>
<comment type="catalytic activity">
    <reaction evidence="1">
        <text>di-trans,octa-cis-undecaprenyl diphospho-N-acetyl-alpha-D-muramoyl-L-alanyl-D-glutamyl-meso-2,6-diaminopimeloyl-D-alanyl-D-alanine + UDP-N-acetyl-alpha-D-glucosamine = di-trans,octa-cis-undecaprenyl diphospho-[N-acetyl-alpha-D-glucosaminyl-(1-&gt;4)]-N-acetyl-alpha-D-muramoyl-L-alanyl-D-glutamyl-meso-2,6-diaminopimeloyl-D-alanyl-D-alanine + UDP + H(+)</text>
        <dbReference type="Rhea" id="RHEA:31227"/>
        <dbReference type="ChEBI" id="CHEBI:15378"/>
        <dbReference type="ChEBI" id="CHEBI:57705"/>
        <dbReference type="ChEBI" id="CHEBI:58223"/>
        <dbReference type="ChEBI" id="CHEBI:61387"/>
        <dbReference type="ChEBI" id="CHEBI:61388"/>
        <dbReference type="EC" id="2.4.1.227"/>
    </reaction>
</comment>
<comment type="pathway">
    <text evidence="1">Cell wall biogenesis; peptidoglycan biosynthesis.</text>
</comment>
<comment type="subcellular location">
    <subcellularLocation>
        <location evidence="1">Cell inner membrane</location>
        <topology evidence="1">Peripheral membrane protein</topology>
        <orientation evidence="1">Cytoplasmic side</orientation>
    </subcellularLocation>
</comment>
<comment type="similarity">
    <text evidence="1">Belongs to the glycosyltransferase 28 family. MurG subfamily.</text>
</comment>
<sequence length="362" mass="37596">MSAAPLCLIAAGGTGGHMFPAQSLAETLLAQGWRVKLSTDERGARYAGAFPAEVAREVVSSATTARGGALARLAVPFRIGAGVLAAIRAMRADRPAVVVGFGGYPTIPAMSAALVLRIPRMIHEQNGIMGRVNMAFARRVDRVACGTWPTRLPPGVQGIHTGNPVRQAVLDRAGAPYVPPGEGGLNLLVIGGSQGARVLSDMVPEAIAGLPDEMRTRLSVSHQARAEDAERVIAAYASAGISAVVRPFFDDVPQRLADCQLVISRAGASSIADITVIGRPAILIPYAAATGDHQTANARALAESGAGVVLPESVLDAESLRRDMRDILSDSARATAMAAAALTLARPDAAQRLADLVTELTR</sequence>
<protein>
    <recommendedName>
        <fullName evidence="1">UDP-N-acetylglucosamine--N-acetylmuramyl-(pentapeptide) pyrophosphoryl-undecaprenol N-acetylglucosamine transferase</fullName>
        <ecNumber evidence="1">2.4.1.227</ecNumber>
    </recommendedName>
    <alternativeName>
        <fullName evidence="1">Undecaprenyl-PP-MurNAc-pentapeptide-UDPGlcNAc GlcNAc transferase</fullName>
    </alternativeName>
</protein>
<feature type="chain" id="PRO_0000315133" description="UDP-N-acetylglucosamine--N-acetylmuramyl-(pentapeptide) pyrophosphoryl-undecaprenol N-acetylglucosamine transferase">
    <location>
        <begin position="1"/>
        <end position="362"/>
    </location>
</feature>
<feature type="binding site" evidence="1">
    <location>
        <begin position="14"/>
        <end position="16"/>
    </location>
    <ligand>
        <name>UDP-N-acetyl-alpha-D-glucosamine</name>
        <dbReference type="ChEBI" id="CHEBI:57705"/>
    </ligand>
</feature>
<feature type="binding site" evidence="1">
    <location>
        <position position="126"/>
    </location>
    <ligand>
        <name>UDP-N-acetyl-alpha-D-glucosamine</name>
        <dbReference type="ChEBI" id="CHEBI:57705"/>
    </ligand>
</feature>
<feature type="binding site" evidence="1">
    <location>
        <position position="166"/>
    </location>
    <ligand>
        <name>UDP-N-acetyl-alpha-D-glucosamine</name>
        <dbReference type="ChEBI" id="CHEBI:57705"/>
    </ligand>
</feature>
<feature type="binding site" evidence="1">
    <location>
        <position position="193"/>
    </location>
    <ligand>
        <name>UDP-N-acetyl-alpha-D-glucosamine</name>
        <dbReference type="ChEBI" id="CHEBI:57705"/>
    </ligand>
</feature>
<feature type="binding site" evidence="1">
    <location>
        <position position="294"/>
    </location>
    <ligand>
        <name>UDP-N-acetyl-alpha-D-glucosamine</name>
        <dbReference type="ChEBI" id="CHEBI:57705"/>
    </ligand>
</feature>
<accession>A1BAL5</accession>
<dbReference type="EC" id="2.4.1.227" evidence="1"/>
<dbReference type="EMBL" id="CP000490">
    <property type="protein sequence ID" value="ABL72559.1"/>
    <property type="molecule type" value="Genomic_DNA"/>
</dbReference>
<dbReference type="RefSeq" id="WP_011750720.1">
    <property type="nucleotide sequence ID" value="NC_008687.1"/>
</dbReference>
<dbReference type="SMR" id="A1BAL5"/>
<dbReference type="STRING" id="318586.Pden_4495"/>
<dbReference type="CAZy" id="GT28">
    <property type="family name" value="Glycosyltransferase Family 28"/>
</dbReference>
<dbReference type="EnsemblBacteria" id="ABL72559">
    <property type="protein sequence ID" value="ABL72559"/>
    <property type="gene ID" value="Pden_4495"/>
</dbReference>
<dbReference type="GeneID" id="93454161"/>
<dbReference type="KEGG" id="pde:Pden_4495"/>
<dbReference type="eggNOG" id="COG0707">
    <property type="taxonomic scope" value="Bacteria"/>
</dbReference>
<dbReference type="HOGENOM" id="CLU_037404_2_1_5"/>
<dbReference type="OrthoDB" id="9808936at2"/>
<dbReference type="UniPathway" id="UPA00219"/>
<dbReference type="Proteomes" id="UP000000361">
    <property type="component" value="Chromosome 2"/>
</dbReference>
<dbReference type="GO" id="GO:0005886">
    <property type="term" value="C:plasma membrane"/>
    <property type="evidence" value="ECO:0007669"/>
    <property type="project" value="UniProtKB-SubCell"/>
</dbReference>
<dbReference type="GO" id="GO:0051991">
    <property type="term" value="F:UDP-N-acetyl-D-glucosamine:N-acetylmuramoyl-L-alanyl-D-glutamyl-meso-2,6-diaminopimelyl-D-alanyl-D-alanine-diphosphoundecaprenol 4-beta-N-acetylglucosaminlytransferase activity"/>
    <property type="evidence" value="ECO:0007669"/>
    <property type="project" value="RHEA"/>
</dbReference>
<dbReference type="GO" id="GO:0050511">
    <property type="term" value="F:undecaprenyldiphospho-muramoylpentapeptide beta-N-acetylglucosaminyltransferase activity"/>
    <property type="evidence" value="ECO:0007669"/>
    <property type="project" value="UniProtKB-UniRule"/>
</dbReference>
<dbReference type="GO" id="GO:0005975">
    <property type="term" value="P:carbohydrate metabolic process"/>
    <property type="evidence" value="ECO:0007669"/>
    <property type="project" value="InterPro"/>
</dbReference>
<dbReference type="GO" id="GO:0051301">
    <property type="term" value="P:cell division"/>
    <property type="evidence" value="ECO:0007669"/>
    <property type="project" value="UniProtKB-KW"/>
</dbReference>
<dbReference type="GO" id="GO:0071555">
    <property type="term" value="P:cell wall organization"/>
    <property type="evidence" value="ECO:0007669"/>
    <property type="project" value="UniProtKB-KW"/>
</dbReference>
<dbReference type="GO" id="GO:0030259">
    <property type="term" value="P:lipid glycosylation"/>
    <property type="evidence" value="ECO:0007669"/>
    <property type="project" value="UniProtKB-UniRule"/>
</dbReference>
<dbReference type="GO" id="GO:0009252">
    <property type="term" value="P:peptidoglycan biosynthetic process"/>
    <property type="evidence" value="ECO:0007669"/>
    <property type="project" value="UniProtKB-UniRule"/>
</dbReference>
<dbReference type="GO" id="GO:0008360">
    <property type="term" value="P:regulation of cell shape"/>
    <property type="evidence" value="ECO:0007669"/>
    <property type="project" value="UniProtKB-KW"/>
</dbReference>
<dbReference type="CDD" id="cd03785">
    <property type="entry name" value="GT28_MurG"/>
    <property type="match status" value="1"/>
</dbReference>
<dbReference type="Gene3D" id="3.40.50.2000">
    <property type="entry name" value="Glycogen Phosphorylase B"/>
    <property type="match status" value="2"/>
</dbReference>
<dbReference type="HAMAP" id="MF_00033">
    <property type="entry name" value="MurG"/>
    <property type="match status" value="1"/>
</dbReference>
<dbReference type="InterPro" id="IPR006009">
    <property type="entry name" value="GlcNAc_MurG"/>
</dbReference>
<dbReference type="InterPro" id="IPR007235">
    <property type="entry name" value="Glyco_trans_28_C"/>
</dbReference>
<dbReference type="InterPro" id="IPR004276">
    <property type="entry name" value="GlycoTrans_28_N"/>
</dbReference>
<dbReference type="PANTHER" id="PTHR21015:SF22">
    <property type="entry name" value="GLYCOSYLTRANSFERASE"/>
    <property type="match status" value="1"/>
</dbReference>
<dbReference type="PANTHER" id="PTHR21015">
    <property type="entry name" value="UDP-N-ACETYLGLUCOSAMINE--N-ACETYLMURAMYL-(PENTAPEPTIDE) PYROPHOSPHORYL-UNDECAPRENOL N-ACETYLGLUCOSAMINE TRANSFERASE 1"/>
    <property type="match status" value="1"/>
</dbReference>
<dbReference type="Pfam" id="PF04101">
    <property type="entry name" value="Glyco_tran_28_C"/>
    <property type="match status" value="1"/>
</dbReference>
<dbReference type="Pfam" id="PF03033">
    <property type="entry name" value="Glyco_transf_28"/>
    <property type="match status" value="1"/>
</dbReference>
<dbReference type="SUPFAM" id="SSF53756">
    <property type="entry name" value="UDP-Glycosyltransferase/glycogen phosphorylase"/>
    <property type="match status" value="1"/>
</dbReference>